<name>H2A_GIBZE</name>
<keyword id="KW-0007">Acetylation</keyword>
<keyword id="KW-0158">Chromosome</keyword>
<keyword id="KW-0238">DNA-binding</keyword>
<keyword id="KW-0488">Methylation</keyword>
<keyword id="KW-0544">Nucleosome core</keyword>
<keyword id="KW-0539">Nucleus</keyword>
<keyword id="KW-1185">Reference proteome</keyword>
<accession>Q4HTT1</accession>
<accession>A0A0E0SAM7</accession>
<accession>V6RR66</accession>
<evidence type="ECO:0000250" key="1"/>
<evidence type="ECO:0000256" key="2">
    <source>
        <dbReference type="SAM" id="MobiDB-lite"/>
    </source>
</evidence>
<evidence type="ECO:0000305" key="3"/>
<reference key="1">
    <citation type="journal article" date="2007" name="Science">
        <title>The Fusarium graminearum genome reveals a link between localized polymorphism and pathogen specialization.</title>
        <authorList>
            <person name="Cuomo C.A."/>
            <person name="Gueldener U."/>
            <person name="Xu J.-R."/>
            <person name="Trail F."/>
            <person name="Turgeon B.G."/>
            <person name="Di Pietro A."/>
            <person name="Walton J.D."/>
            <person name="Ma L.-J."/>
            <person name="Baker S.E."/>
            <person name="Rep M."/>
            <person name="Adam G."/>
            <person name="Antoniw J."/>
            <person name="Baldwin T."/>
            <person name="Calvo S.E."/>
            <person name="Chang Y.-L."/>
            <person name="DeCaprio D."/>
            <person name="Gale L.R."/>
            <person name="Gnerre S."/>
            <person name="Goswami R.S."/>
            <person name="Hammond-Kosack K."/>
            <person name="Harris L.J."/>
            <person name="Hilburn K."/>
            <person name="Kennell J.C."/>
            <person name="Kroken S."/>
            <person name="Magnuson J.K."/>
            <person name="Mannhaupt G."/>
            <person name="Mauceli E.W."/>
            <person name="Mewes H.-W."/>
            <person name="Mitterbauer R."/>
            <person name="Muehlbauer G."/>
            <person name="Muensterkoetter M."/>
            <person name="Nelson D."/>
            <person name="O'Donnell K."/>
            <person name="Ouellet T."/>
            <person name="Qi W."/>
            <person name="Quesneville H."/>
            <person name="Roncero M.I.G."/>
            <person name="Seong K.-Y."/>
            <person name="Tetko I.V."/>
            <person name="Urban M."/>
            <person name="Waalwijk C."/>
            <person name="Ward T.J."/>
            <person name="Yao J."/>
            <person name="Birren B.W."/>
            <person name="Kistler H.C."/>
        </authorList>
    </citation>
    <scope>NUCLEOTIDE SEQUENCE [LARGE SCALE GENOMIC DNA]</scope>
    <source>
        <strain>ATCC MYA-4620 / CBS 123657 / FGSC 9075 / NRRL 31084 / PH-1</strain>
    </source>
</reference>
<reference key="2">
    <citation type="journal article" date="2010" name="Nature">
        <title>Comparative genomics reveals mobile pathogenicity chromosomes in Fusarium.</title>
        <authorList>
            <person name="Ma L.-J."/>
            <person name="van der Does H.C."/>
            <person name="Borkovich K.A."/>
            <person name="Coleman J.J."/>
            <person name="Daboussi M.-J."/>
            <person name="Di Pietro A."/>
            <person name="Dufresne M."/>
            <person name="Freitag M."/>
            <person name="Grabherr M."/>
            <person name="Henrissat B."/>
            <person name="Houterman P.M."/>
            <person name="Kang S."/>
            <person name="Shim W.-B."/>
            <person name="Woloshuk C."/>
            <person name="Xie X."/>
            <person name="Xu J.-R."/>
            <person name="Antoniw J."/>
            <person name="Baker S.E."/>
            <person name="Bluhm B.H."/>
            <person name="Breakspear A."/>
            <person name="Brown D.W."/>
            <person name="Butchko R.A.E."/>
            <person name="Chapman S."/>
            <person name="Coulson R."/>
            <person name="Coutinho P.M."/>
            <person name="Danchin E.G.J."/>
            <person name="Diener A."/>
            <person name="Gale L.R."/>
            <person name="Gardiner D.M."/>
            <person name="Goff S."/>
            <person name="Hammond-Kosack K.E."/>
            <person name="Hilburn K."/>
            <person name="Hua-Van A."/>
            <person name="Jonkers W."/>
            <person name="Kazan K."/>
            <person name="Kodira C.D."/>
            <person name="Koehrsen M."/>
            <person name="Kumar L."/>
            <person name="Lee Y.-H."/>
            <person name="Li L."/>
            <person name="Manners J.M."/>
            <person name="Miranda-Saavedra D."/>
            <person name="Mukherjee M."/>
            <person name="Park G."/>
            <person name="Park J."/>
            <person name="Park S.-Y."/>
            <person name="Proctor R.H."/>
            <person name="Regev A."/>
            <person name="Ruiz-Roldan M.C."/>
            <person name="Sain D."/>
            <person name="Sakthikumar S."/>
            <person name="Sykes S."/>
            <person name="Schwartz D.C."/>
            <person name="Turgeon B.G."/>
            <person name="Wapinski I."/>
            <person name="Yoder O."/>
            <person name="Young S."/>
            <person name="Zeng Q."/>
            <person name="Zhou S."/>
            <person name="Galagan J."/>
            <person name="Cuomo C.A."/>
            <person name="Kistler H.C."/>
            <person name="Rep M."/>
        </authorList>
    </citation>
    <scope>GENOME REANNOTATION</scope>
    <source>
        <strain>ATCC MYA-4620 / CBS 123657 / FGSC 9075 / NRRL 31084 / PH-1</strain>
    </source>
</reference>
<reference key="3">
    <citation type="journal article" date="2015" name="BMC Genomics">
        <title>The completed genome sequence of the pathogenic ascomycete fungus Fusarium graminearum.</title>
        <authorList>
            <person name="King R."/>
            <person name="Urban M."/>
            <person name="Hammond-Kosack M.C.U."/>
            <person name="Hassani-Pak K."/>
            <person name="Hammond-Kosack K.E."/>
        </authorList>
    </citation>
    <scope>NUCLEOTIDE SEQUENCE [LARGE SCALE GENOMIC DNA]</scope>
    <source>
        <strain>ATCC MYA-4620 / CBS 123657 / FGSC 9075 / NRRL 31084 / PH-1</strain>
    </source>
</reference>
<feature type="initiator methionine" description="Removed" evidence="1">
    <location>
        <position position="1"/>
    </location>
</feature>
<feature type="chain" id="PRO_0000228730" description="Histone H2A">
    <location>
        <begin position="2"/>
        <end position="134"/>
    </location>
</feature>
<feature type="region of interest" description="Disordered" evidence="2">
    <location>
        <begin position="1"/>
        <end position="24"/>
    </location>
</feature>
<feature type="compositionally biased region" description="Gly residues" evidence="2">
    <location>
        <begin position="1"/>
        <end position="11"/>
    </location>
</feature>
<feature type="site" description="Not ubiquitinated" evidence="3">
    <location>
        <position position="121"/>
    </location>
</feature>
<feature type="modified residue" description="N6-acetyllysine" evidence="1">
    <location>
        <position position="6"/>
    </location>
</feature>
<feature type="modified residue" description="N6-acetyllysine" evidence="1">
    <location>
        <position position="10"/>
    </location>
</feature>
<feature type="modified residue" description="N5-methylglutamine" evidence="1">
    <location>
        <position position="107"/>
    </location>
</feature>
<gene>
    <name type="primary">HTA1</name>
    <name type="ORF">FGRRES_11627</name>
    <name type="ORF">FGSG_11627</name>
</gene>
<comment type="function">
    <text>Core component of nucleosome. Nucleosomes wrap and compact DNA into chromatin, limiting DNA accessibility to the cellular machineries which require DNA as a template. Histones thereby play a central role in transcription regulation, DNA repair, DNA replication and chromosomal stability. DNA accessibility is regulated via a complex set of post-translational modifications of histones, also called histone code, and nucleosome remodeling.</text>
</comment>
<comment type="subunit">
    <text>The nucleosome is a histone octamer containing two molecules each of H2A, H2B, H3 and H4 assembled in one H3-H4 heterotetramer and two H2A-H2B heterodimers. The octamer wraps approximately 147 bp of DNA.</text>
</comment>
<comment type="subcellular location">
    <subcellularLocation>
        <location evidence="1">Nucleus</location>
    </subcellularLocation>
    <subcellularLocation>
        <location evidence="1">Chromosome</location>
    </subcellularLocation>
</comment>
<comment type="PTM">
    <text evidence="1">Acetylated by ESA1 to form H2AK4ac and H2AK7ac.</text>
</comment>
<comment type="miscellaneous">
    <text evidence="3">In contrast to vertebrates and insects, its C-terminus is not monoubiquitinated.</text>
</comment>
<comment type="similarity">
    <text evidence="3">Belongs to the histone H2A family.</text>
</comment>
<comment type="caution">
    <text evidence="3">To ensure consistency between histone entries, we follow the 'Brno' nomenclature for histone modifications, with positions referring to those used in the literature for the 'closest' model organism. Due to slight variations in histone sequences between organisms and to the presence of initiator methionine in UniProtKB/Swiss-Prot sequences, the actual positions of modified amino acids in the sequence generally differ. In this entry the following conventions are used: H2AK4ac = acetylated Lys-6; H2AK7ac = acetylated Lys-10.</text>
</comment>
<sequence length="134" mass="14160">MTGGGKSGGKASGSKNAQSRSSKAGLAFPVGRVHRLLRKGNYAQRVGAGAPVYLAAVLEYLAAEILELAGNAARDNKKTRIIPRHLQLAIRNDEELNKLLGHVTIAQGGVLPNIHQNLLPKKTGKTGKTSSMEL</sequence>
<organism>
    <name type="scientific">Gibberella zeae (strain ATCC MYA-4620 / CBS 123657 / FGSC 9075 / NRRL 31084 / PH-1)</name>
    <name type="common">Wheat head blight fungus</name>
    <name type="synonym">Fusarium graminearum</name>
    <dbReference type="NCBI Taxonomy" id="229533"/>
    <lineage>
        <taxon>Eukaryota</taxon>
        <taxon>Fungi</taxon>
        <taxon>Dikarya</taxon>
        <taxon>Ascomycota</taxon>
        <taxon>Pezizomycotina</taxon>
        <taxon>Sordariomycetes</taxon>
        <taxon>Hypocreomycetidae</taxon>
        <taxon>Hypocreales</taxon>
        <taxon>Nectriaceae</taxon>
        <taxon>Fusarium</taxon>
    </lineage>
</organism>
<protein>
    <recommendedName>
        <fullName>Histone H2A</fullName>
    </recommendedName>
</protein>
<proteinExistence type="inferred from homology"/>
<dbReference type="EMBL" id="DS231668">
    <property type="protein sequence ID" value="ESU16497.1"/>
    <property type="molecule type" value="Genomic_DNA"/>
</dbReference>
<dbReference type="EMBL" id="HG970335">
    <property type="protein sequence ID" value="CEF83490.1"/>
    <property type="molecule type" value="Genomic_DNA"/>
</dbReference>
<dbReference type="RefSeq" id="XP_011327819.1">
    <property type="nucleotide sequence ID" value="XM_011329517.1"/>
</dbReference>
<dbReference type="SMR" id="Q4HTT1"/>
<dbReference type="FunCoup" id="Q4HTT1">
    <property type="interactions" value="1002"/>
</dbReference>
<dbReference type="STRING" id="229533.Q4HTT1"/>
<dbReference type="GeneID" id="23558448"/>
<dbReference type="KEGG" id="fgr:FGSG_11627"/>
<dbReference type="VEuPathDB" id="FungiDB:FGRAMPH1_01G26109"/>
<dbReference type="eggNOG" id="KOG1756">
    <property type="taxonomic scope" value="Eukaryota"/>
</dbReference>
<dbReference type="HOGENOM" id="CLU_062828_3_0_1"/>
<dbReference type="InParanoid" id="Q4HTT1"/>
<dbReference type="OrthoDB" id="124593at110618"/>
<dbReference type="PHI-base" id="PHI:1468"/>
<dbReference type="Proteomes" id="UP000070720">
    <property type="component" value="Chromosome 4"/>
</dbReference>
<dbReference type="GO" id="GO:0000786">
    <property type="term" value="C:nucleosome"/>
    <property type="evidence" value="ECO:0007669"/>
    <property type="project" value="UniProtKB-KW"/>
</dbReference>
<dbReference type="GO" id="GO:0005634">
    <property type="term" value="C:nucleus"/>
    <property type="evidence" value="ECO:0007669"/>
    <property type="project" value="UniProtKB-SubCell"/>
</dbReference>
<dbReference type="GO" id="GO:0003677">
    <property type="term" value="F:DNA binding"/>
    <property type="evidence" value="ECO:0007669"/>
    <property type="project" value="UniProtKB-KW"/>
</dbReference>
<dbReference type="GO" id="GO:0046982">
    <property type="term" value="F:protein heterodimerization activity"/>
    <property type="evidence" value="ECO:0007669"/>
    <property type="project" value="InterPro"/>
</dbReference>
<dbReference type="GO" id="GO:0030527">
    <property type="term" value="F:structural constituent of chromatin"/>
    <property type="evidence" value="ECO:0007669"/>
    <property type="project" value="InterPro"/>
</dbReference>
<dbReference type="CDD" id="cd00074">
    <property type="entry name" value="HFD_H2A"/>
    <property type="match status" value="1"/>
</dbReference>
<dbReference type="FunFam" id="1.10.20.10:FF:000008">
    <property type="entry name" value="Histone H2A"/>
    <property type="match status" value="1"/>
</dbReference>
<dbReference type="Gene3D" id="1.10.20.10">
    <property type="entry name" value="Histone, subunit A"/>
    <property type="match status" value="1"/>
</dbReference>
<dbReference type="InterPro" id="IPR009072">
    <property type="entry name" value="Histone-fold"/>
</dbReference>
<dbReference type="InterPro" id="IPR002119">
    <property type="entry name" value="Histone_H2A"/>
</dbReference>
<dbReference type="InterPro" id="IPR007125">
    <property type="entry name" value="Histone_H2A/H2B/H3"/>
</dbReference>
<dbReference type="InterPro" id="IPR032454">
    <property type="entry name" value="Histone_H2A_C"/>
</dbReference>
<dbReference type="InterPro" id="IPR032458">
    <property type="entry name" value="Histone_H2A_CS"/>
</dbReference>
<dbReference type="PANTHER" id="PTHR23430">
    <property type="entry name" value="HISTONE H2A"/>
    <property type="match status" value="1"/>
</dbReference>
<dbReference type="Pfam" id="PF00125">
    <property type="entry name" value="Histone"/>
    <property type="match status" value="1"/>
</dbReference>
<dbReference type="Pfam" id="PF16211">
    <property type="entry name" value="Histone_H2A_C"/>
    <property type="match status" value="1"/>
</dbReference>
<dbReference type="PRINTS" id="PR00620">
    <property type="entry name" value="HISTONEH2A"/>
</dbReference>
<dbReference type="SMART" id="SM00414">
    <property type="entry name" value="H2A"/>
    <property type="match status" value="1"/>
</dbReference>
<dbReference type="SUPFAM" id="SSF47113">
    <property type="entry name" value="Histone-fold"/>
    <property type="match status" value="1"/>
</dbReference>
<dbReference type="PROSITE" id="PS00046">
    <property type="entry name" value="HISTONE_H2A"/>
    <property type="match status" value="1"/>
</dbReference>